<dbReference type="PDB" id="1UT3">
    <property type="method" value="NMR"/>
    <property type="chains" value="A=1-38"/>
</dbReference>
<dbReference type="PDBsum" id="1UT3"/>
<dbReference type="SMR" id="P83430"/>
<dbReference type="GO" id="GO:0005576">
    <property type="term" value="C:extracellular region"/>
    <property type="evidence" value="ECO:0007669"/>
    <property type="project" value="UniProtKB-SubCell"/>
</dbReference>
<dbReference type="GO" id="GO:0042742">
    <property type="term" value="P:defense response to bacterium"/>
    <property type="evidence" value="ECO:0007669"/>
    <property type="project" value="UniProtKB-KW"/>
</dbReference>
<dbReference type="GO" id="GO:0050832">
    <property type="term" value="P:defense response to fungus"/>
    <property type="evidence" value="ECO:0007669"/>
    <property type="project" value="UniProtKB-KW"/>
</dbReference>
<dbReference type="GO" id="GO:0031640">
    <property type="term" value="P:killing of cells of another organism"/>
    <property type="evidence" value="ECO:0007669"/>
    <property type="project" value="UniProtKB-KW"/>
</dbReference>
<dbReference type="InterPro" id="IPR001855">
    <property type="entry name" value="Defensin_beta-like"/>
</dbReference>
<dbReference type="Pfam" id="PF00711">
    <property type="entry name" value="Defensin_beta"/>
    <property type="match status" value="1"/>
</dbReference>
<dbReference type="SUPFAM" id="SSF57392">
    <property type="entry name" value="Defensin-like"/>
    <property type="match status" value="1"/>
</dbReference>
<proteinExistence type="evidence at protein level"/>
<feature type="peptide" id="PRO_0000044729" description="Spheniscin-2">
    <location>
        <begin position="1"/>
        <end position="38"/>
    </location>
</feature>
<feature type="disulfide bond" evidence="2">
    <location>
        <begin position="5"/>
        <end position="33"/>
    </location>
</feature>
<feature type="disulfide bond" evidence="2">
    <location>
        <begin position="12"/>
        <end position="27"/>
    </location>
</feature>
<feature type="disulfide bond" evidence="2">
    <location>
        <begin position="17"/>
        <end position="34"/>
    </location>
</feature>
<feature type="strand" evidence="4">
    <location>
        <begin position="7"/>
        <end position="9"/>
    </location>
</feature>
<feature type="strand" evidence="4">
    <location>
        <begin position="11"/>
        <end position="16"/>
    </location>
</feature>
<feature type="strand" evidence="4">
    <location>
        <begin position="21"/>
        <end position="36"/>
    </location>
</feature>
<accession>P83430</accession>
<keyword id="KW-0002">3D-structure</keyword>
<keyword id="KW-0044">Antibiotic</keyword>
<keyword id="KW-0929">Antimicrobial</keyword>
<keyword id="KW-0211">Defensin</keyword>
<keyword id="KW-0903">Direct protein sequencing</keyword>
<keyword id="KW-1015">Disulfide bond</keyword>
<keyword id="KW-0295">Fungicide</keyword>
<keyword id="KW-0964">Secreted</keyword>
<sequence length="38" mass="4507">SFGLCRLRRGFCARGRCRFPSIPIGRCSRFVQCCRRVW</sequence>
<reference key="1">
    <citation type="journal article" date="2003" name="J. Biol. Chem.">
        <title>Spheniscins, avian beta-defensins in preserved stomach contents of the king penguin, Aptenodytes patagonicus.</title>
        <authorList>
            <person name="Thouzeau C."/>
            <person name="Le Maho Y."/>
            <person name="Froget G."/>
            <person name="Sabatier L."/>
            <person name="Le Bohec C."/>
            <person name="Hoffmann J.A."/>
            <person name="Bulet P."/>
        </authorList>
    </citation>
    <scope>PROTEIN SEQUENCE</scope>
    <scope>FUNCTION</scope>
    <scope>SUBUNIT</scope>
    <scope>SUBCELLULAR LOCATION</scope>
    <scope>MASS SPECTROMETRY</scope>
    <scope>SYNTHESIS</scope>
    <source>
        <tissue>Stomach</tissue>
    </source>
</reference>
<reference key="2">
    <citation type="journal article" date="2004" name="J. Biol. Chem.">
        <title>Solution structure of spheniscin, a beta-defensin from the penguin stomach.</title>
        <authorList>
            <person name="Landon C."/>
            <person name="Thouzeau C."/>
            <person name="Labbe H."/>
            <person name="Bulet P."/>
            <person name="Vovelle F."/>
        </authorList>
    </citation>
    <scope>STRUCTURE BY NMR</scope>
    <scope>DISULFIDE BONDS</scope>
</reference>
<comment type="function">
    <text evidence="1">Has antifungal activity and antibacterial activity against Gram-positive and Gram-negative bacteria. Involved in the process of food preservation in the stomach during the incubation fast. May also be present during infection.</text>
</comment>
<comment type="subunit">
    <text evidence="1">Monomer.</text>
</comment>
<comment type="subcellular location">
    <subcellularLocation>
        <location evidence="1">Secreted</location>
    </subcellularLocation>
</comment>
<comment type="tissue specificity">
    <text>Secreted into the stomach cavity.</text>
</comment>
<comment type="mass spectrometry" mass="4501.7" method="MALDI" evidence="1"/>
<comment type="similarity">
    <text evidence="3">Belongs to the beta-defensin family.</text>
</comment>
<evidence type="ECO:0000269" key="1">
    <source>
    </source>
</evidence>
<evidence type="ECO:0000269" key="2">
    <source>
    </source>
</evidence>
<evidence type="ECO:0000305" key="3"/>
<evidence type="ECO:0007829" key="4">
    <source>
        <dbReference type="PDB" id="1UT3"/>
    </source>
</evidence>
<organism>
    <name type="scientific">Aptenodytes patagonicus</name>
    <name type="common">King penguin</name>
    <dbReference type="NCBI Taxonomy" id="9234"/>
    <lineage>
        <taxon>Eukaryota</taxon>
        <taxon>Metazoa</taxon>
        <taxon>Chordata</taxon>
        <taxon>Craniata</taxon>
        <taxon>Vertebrata</taxon>
        <taxon>Euteleostomi</taxon>
        <taxon>Archelosauria</taxon>
        <taxon>Archosauria</taxon>
        <taxon>Dinosauria</taxon>
        <taxon>Saurischia</taxon>
        <taxon>Theropoda</taxon>
        <taxon>Coelurosauria</taxon>
        <taxon>Aves</taxon>
        <taxon>Neognathae</taxon>
        <taxon>Neoaves</taxon>
        <taxon>Aequornithes</taxon>
        <taxon>Sphenisciformes</taxon>
        <taxon>Spheniscidae</taxon>
        <taxon>Aptenodytes</taxon>
    </lineage>
</organism>
<protein>
    <recommendedName>
        <fullName>Spheniscin-2</fullName>
        <shortName>Sphe-2</shortName>
    </recommendedName>
    <alternativeName>
        <fullName>pBD-2</fullName>
    </alternativeName>
</protein>
<name>SPHE2_APTPA</name>